<reference key="1">
    <citation type="journal article" date="1997" name="J. Bacteriol.">
        <title>katGI and katGII encode two different catalases-peroxidases in Mycobacterium fortuitum.</title>
        <authorList>
            <person name="Menendez M.C."/>
            <person name="Ainsa J.A."/>
            <person name="Martin C."/>
            <person name="Garcia M.J."/>
        </authorList>
    </citation>
    <scope>NUCLEOTIDE SEQUENCE [GENOMIC DNA]</scope>
    <source>
        <strain>ATCC 6841 / DSM 46621 / CIP 104534 / JCM 6387 / KCTC 9510 / NBRC 13159 / NCTC 10394</strain>
    </source>
</reference>
<feature type="chain" id="PRO_0000345093" description="Catalase-peroxidase 2">
    <location>
        <begin position="1"/>
        <end position="733"/>
    </location>
</feature>
<feature type="region of interest" description="Disordered" evidence="2">
    <location>
        <begin position="1"/>
        <end position="35"/>
    </location>
</feature>
<feature type="active site" description="Proton acceptor" evidence="1">
    <location>
        <position position="107"/>
    </location>
</feature>
<feature type="binding site" description="axial binding residue" evidence="1">
    <location>
        <position position="275"/>
    </location>
    <ligand>
        <name>heme</name>
        <dbReference type="ChEBI" id="CHEBI:30413"/>
    </ligand>
    <ligandPart>
        <name>Fe</name>
        <dbReference type="ChEBI" id="CHEBI:18248"/>
    </ligandPart>
</feature>
<feature type="site" description="Transition state stabilizer" evidence="1">
    <location>
        <position position="103"/>
    </location>
</feature>
<feature type="cross-link" description="Tryptophyl-tyrosyl-methioninium (Trp-Tyr) (with M-260)" evidence="1">
    <location>
        <begin position="106"/>
        <end position="234"/>
    </location>
</feature>
<feature type="cross-link" description="Tryptophyl-tyrosyl-methioninium (Tyr-Met) (with W-106)" evidence="1">
    <location>
        <begin position="234"/>
        <end position="260"/>
    </location>
</feature>
<evidence type="ECO:0000255" key="1">
    <source>
        <dbReference type="HAMAP-Rule" id="MF_01961"/>
    </source>
</evidence>
<evidence type="ECO:0000256" key="2">
    <source>
        <dbReference type="SAM" id="MobiDB-lite"/>
    </source>
</evidence>
<sequence length="733" mass="80596">MAEAETHPPIGESQTEPAESGCPMRIKPPVEGGSNRDWWPNAVNLKILQKNPPAIDPSDEGYDSEAVKSLDVEAFQRDFDELLTNSQDWWPADFGHYGPLFVRMSWHAAGTYRVEDGRGGGGRGMQPFAPLNSWPDNVSLDKARRLLWPLKKKYGKQISWSDLIVYSGNRAMEHMGFKTAGFAFGRPDYWEPEEDIYWGAEAEWLGSQDRYAGANGDRTKLENPPXXPHMGLIYVNPEGPEGNPDYLAAAIDIRETFGRMAMNDIETAALIVGGHTFGKTHGATDIENGVEPEXXPLEQMGLGWANPGLGNDTVSSGLEVTWTQHPTKWDNSFLEILYSNEWELTKSPAGANQWKPKDNGWANSWPMAQGTGKTHPSMLTTDLSMRFDPIYGEITRRWLDHPEELAEEYAKAWFKLIHRDMGPVTRYLGPLVPKQTWLWQDIIPAGKQLSDADVATLKAAIADSGLSIQQLVNTAWKAAASYRSSDMRGGNGGRIRLQPQLGWEVNEPEELAPVIAKLEEIQAASDSGVSFADLVVLGGVVGLEKAIKAAGFDVAVPFTSGPRDALQEQTDVDSFAYLEPKGDGFRNFVAKGDSVPAEYRLIDRANLLGLSAPQMTVLIGGLRVLGANHGGSELGVLTDKVGQLTNDYFVNLTDMGTKWAPAPADDGTYVGTDRATGSPKWTASRVDLLFGSNSQLRALAEVYAEDDSKEKFVKDFVAAWTKVMNADRFDLEA</sequence>
<name>KATG2_MYCFO</name>
<protein>
    <recommendedName>
        <fullName evidence="1">Catalase-peroxidase 2</fullName>
        <shortName evidence="1">CP 2</shortName>
        <ecNumber evidence="1">1.11.1.21</ecNumber>
    </recommendedName>
    <alternativeName>
        <fullName evidence="1">Peroxidase/catalase 2</fullName>
    </alternativeName>
</protein>
<comment type="function">
    <text evidence="1">Bifunctional enzyme with both catalase and broad-spectrum peroxidase activity. May play a role in the intracellular survival of mycobacteria (By similarity).</text>
</comment>
<comment type="catalytic activity">
    <reaction evidence="1">
        <text>H2O2 + AH2 = A + 2 H2O</text>
        <dbReference type="Rhea" id="RHEA:30275"/>
        <dbReference type="ChEBI" id="CHEBI:13193"/>
        <dbReference type="ChEBI" id="CHEBI:15377"/>
        <dbReference type="ChEBI" id="CHEBI:16240"/>
        <dbReference type="ChEBI" id="CHEBI:17499"/>
        <dbReference type="EC" id="1.11.1.21"/>
    </reaction>
</comment>
<comment type="catalytic activity">
    <reaction evidence="1">
        <text>2 H2O2 = O2 + 2 H2O</text>
        <dbReference type="Rhea" id="RHEA:20309"/>
        <dbReference type="ChEBI" id="CHEBI:15377"/>
        <dbReference type="ChEBI" id="CHEBI:15379"/>
        <dbReference type="ChEBI" id="CHEBI:16240"/>
        <dbReference type="EC" id="1.11.1.21"/>
    </reaction>
</comment>
<comment type="cofactor">
    <cofactor evidence="1">
        <name>heme b</name>
        <dbReference type="ChEBI" id="CHEBI:60344"/>
    </cofactor>
    <text evidence="1">Binds 1 heme b (iron(II)-protoporphyrin IX) group per dimer.</text>
</comment>
<comment type="subunit">
    <text evidence="1">Homodimer or homotetramer.</text>
</comment>
<comment type="PTM">
    <text evidence="1">Formation of the three residue Trp-Tyr-Met cross-link is important for the catalase, but not the peroxidase activity of the enzyme.</text>
</comment>
<comment type="similarity">
    <text evidence="1">Belongs to the peroxidase family. Peroxidase/catalase subfamily.</text>
</comment>
<keyword id="KW-0349">Heme</keyword>
<keyword id="KW-0376">Hydrogen peroxide</keyword>
<keyword id="KW-0408">Iron</keyword>
<keyword id="KW-0479">Metal-binding</keyword>
<keyword id="KW-0560">Oxidoreductase</keyword>
<keyword id="KW-0575">Peroxidase</keyword>
<organism>
    <name type="scientific">Mycolicibacterium fortuitum</name>
    <name type="common">Mycobacterium fortuitum</name>
    <dbReference type="NCBI Taxonomy" id="1766"/>
    <lineage>
        <taxon>Bacteria</taxon>
        <taxon>Bacillati</taxon>
        <taxon>Actinomycetota</taxon>
        <taxon>Actinomycetes</taxon>
        <taxon>Mycobacteriales</taxon>
        <taxon>Mycobacteriaceae</taxon>
        <taxon>Mycolicibacterium</taxon>
    </lineage>
</organism>
<gene>
    <name evidence="1" type="primary">katG2</name>
    <name type="synonym">katGII</name>
</gene>
<dbReference type="EC" id="1.11.1.21" evidence="1"/>
<dbReference type="EMBL" id="Y07866">
    <property type="protein sequence ID" value="CAA69193.1"/>
    <property type="molecule type" value="Genomic_DNA"/>
</dbReference>
<dbReference type="STRING" id="1766.XA26_57680"/>
<dbReference type="PeroxiBase" id="3128">
    <property type="entry name" value="MfoCP02"/>
</dbReference>
<dbReference type="GO" id="GO:0005829">
    <property type="term" value="C:cytosol"/>
    <property type="evidence" value="ECO:0007669"/>
    <property type="project" value="TreeGrafter"/>
</dbReference>
<dbReference type="GO" id="GO:0004096">
    <property type="term" value="F:catalase activity"/>
    <property type="evidence" value="ECO:0007669"/>
    <property type="project" value="UniProtKB-UniRule"/>
</dbReference>
<dbReference type="GO" id="GO:0020037">
    <property type="term" value="F:heme binding"/>
    <property type="evidence" value="ECO:0007669"/>
    <property type="project" value="InterPro"/>
</dbReference>
<dbReference type="GO" id="GO:0046872">
    <property type="term" value="F:metal ion binding"/>
    <property type="evidence" value="ECO:0007669"/>
    <property type="project" value="UniProtKB-KW"/>
</dbReference>
<dbReference type="GO" id="GO:0070301">
    <property type="term" value="P:cellular response to hydrogen peroxide"/>
    <property type="evidence" value="ECO:0007669"/>
    <property type="project" value="TreeGrafter"/>
</dbReference>
<dbReference type="GO" id="GO:0042744">
    <property type="term" value="P:hydrogen peroxide catabolic process"/>
    <property type="evidence" value="ECO:0007669"/>
    <property type="project" value="UniProtKB-KW"/>
</dbReference>
<dbReference type="FunFam" id="1.10.420.10:FF:000004">
    <property type="entry name" value="Catalase-peroxidase"/>
    <property type="match status" value="1"/>
</dbReference>
<dbReference type="Gene3D" id="1.10.520.10">
    <property type="match status" value="2"/>
</dbReference>
<dbReference type="Gene3D" id="1.10.420.10">
    <property type="entry name" value="Peroxidase, domain 2"/>
    <property type="match status" value="2"/>
</dbReference>
<dbReference type="HAMAP" id="MF_01961">
    <property type="entry name" value="Catal_peroxid"/>
    <property type="match status" value="1"/>
</dbReference>
<dbReference type="InterPro" id="IPR000763">
    <property type="entry name" value="Catalase_peroxidase"/>
</dbReference>
<dbReference type="InterPro" id="IPR002016">
    <property type="entry name" value="Haem_peroxidase"/>
</dbReference>
<dbReference type="InterPro" id="IPR010255">
    <property type="entry name" value="Haem_peroxidase_sf"/>
</dbReference>
<dbReference type="InterPro" id="IPR019794">
    <property type="entry name" value="Peroxidases_AS"/>
</dbReference>
<dbReference type="InterPro" id="IPR019793">
    <property type="entry name" value="Peroxidases_heam-ligand_BS"/>
</dbReference>
<dbReference type="NCBIfam" id="TIGR00198">
    <property type="entry name" value="cat_per_HPI"/>
    <property type="match status" value="1"/>
</dbReference>
<dbReference type="NCBIfam" id="NF011635">
    <property type="entry name" value="PRK15061.1"/>
    <property type="match status" value="1"/>
</dbReference>
<dbReference type="PANTHER" id="PTHR30555:SF0">
    <property type="entry name" value="CATALASE-PEROXIDASE"/>
    <property type="match status" value="1"/>
</dbReference>
<dbReference type="PANTHER" id="PTHR30555">
    <property type="entry name" value="HYDROPEROXIDASE I, BIFUNCTIONAL CATALASE-PEROXIDASE"/>
    <property type="match status" value="1"/>
</dbReference>
<dbReference type="Pfam" id="PF00141">
    <property type="entry name" value="peroxidase"/>
    <property type="match status" value="2"/>
</dbReference>
<dbReference type="PRINTS" id="PR00460">
    <property type="entry name" value="BPEROXIDASE"/>
</dbReference>
<dbReference type="PRINTS" id="PR00458">
    <property type="entry name" value="PEROXIDASE"/>
</dbReference>
<dbReference type="SUPFAM" id="SSF48113">
    <property type="entry name" value="Heme-dependent peroxidases"/>
    <property type="match status" value="2"/>
</dbReference>
<dbReference type="PROSITE" id="PS00435">
    <property type="entry name" value="PEROXIDASE_1"/>
    <property type="match status" value="1"/>
</dbReference>
<dbReference type="PROSITE" id="PS00436">
    <property type="entry name" value="PEROXIDASE_2"/>
    <property type="match status" value="1"/>
</dbReference>
<proteinExistence type="inferred from homology"/>
<accession>O08405</accession>